<proteinExistence type="inferred from homology"/>
<feature type="chain" id="PRO_0000177451" description="Large ribosomal subunit protein bL35">
    <location>
        <begin position="1"/>
        <end position="64"/>
    </location>
</feature>
<evidence type="ECO:0000255" key="1">
    <source>
        <dbReference type="HAMAP-Rule" id="MF_00514"/>
    </source>
</evidence>
<evidence type="ECO:0000305" key="2"/>
<dbReference type="EMBL" id="AF055586">
    <property type="protein sequence ID" value="AAC38422.1"/>
    <property type="molecule type" value="Genomic_DNA"/>
</dbReference>
<dbReference type="EMBL" id="AF179591">
    <property type="protein sequence ID" value="AAD53321.1"/>
    <property type="molecule type" value="Genomic_DNA"/>
</dbReference>
<dbReference type="EMBL" id="AE003853">
    <property type="protein sequence ID" value="AAF96197.1"/>
    <property type="molecule type" value="Genomic_DNA"/>
</dbReference>
<dbReference type="PIR" id="A82476">
    <property type="entry name" value="A82476"/>
</dbReference>
<dbReference type="RefSeq" id="NP_232685.1">
    <property type="nucleotide sequence ID" value="NC_002506.1"/>
</dbReference>
<dbReference type="RefSeq" id="WP_001885060.1">
    <property type="nucleotide sequence ID" value="NZ_LT906615.1"/>
</dbReference>
<dbReference type="SMR" id="O68845"/>
<dbReference type="STRING" id="243277.VC_A0289"/>
<dbReference type="DNASU" id="2611984"/>
<dbReference type="EnsemblBacteria" id="AAF96197">
    <property type="protein sequence ID" value="AAF96197"/>
    <property type="gene ID" value="VC_A0289"/>
</dbReference>
<dbReference type="GeneID" id="94015622"/>
<dbReference type="KEGG" id="vch:VC_A0289"/>
<dbReference type="PATRIC" id="fig|243277.26.peg.2924"/>
<dbReference type="eggNOG" id="COG0291">
    <property type="taxonomic scope" value="Bacteria"/>
</dbReference>
<dbReference type="HOGENOM" id="CLU_169643_4_3_6"/>
<dbReference type="Proteomes" id="UP000000584">
    <property type="component" value="Chromosome 2"/>
</dbReference>
<dbReference type="GO" id="GO:0022625">
    <property type="term" value="C:cytosolic large ribosomal subunit"/>
    <property type="evidence" value="ECO:0000318"/>
    <property type="project" value="GO_Central"/>
</dbReference>
<dbReference type="GO" id="GO:0003735">
    <property type="term" value="F:structural constituent of ribosome"/>
    <property type="evidence" value="ECO:0000318"/>
    <property type="project" value="GO_Central"/>
</dbReference>
<dbReference type="GO" id="GO:0006412">
    <property type="term" value="P:translation"/>
    <property type="evidence" value="ECO:0007669"/>
    <property type="project" value="UniProtKB-UniRule"/>
</dbReference>
<dbReference type="FunFam" id="4.10.410.60:FF:000001">
    <property type="entry name" value="50S ribosomal protein L35"/>
    <property type="match status" value="1"/>
</dbReference>
<dbReference type="Gene3D" id="4.10.410.60">
    <property type="match status" value="1"/>
</dbReference>
<dbReference type="HAMAP" id="MF_00514">
    <property type="entry name" value="Ribosomal_bL35"/>
    <property type="match status" value="1"/>
</dbReference>
<dbReference type="InterPro" id="IPR001706">
    <property type="entry name" value="Ribosomal_bL35"/>
</dbReference>
<dbReference type="InterPro" id="IPR021137">
    <property type="entry name" value="Ribosomal_bL35-like"/>
</dbReference>
<dbReference type="InterPro" id="IPR018265">
    <property type="entry name" value="Ribosomal_bL35_CS"/>
</dbReference>
<dbReference type="InterPro" id="IPR037229">
    <property type="entry name" value="Ribosomal_bL35_sf"/>
</dbReference>
<dbReference type="NCBIfam" id="TIGR00001">
    <property type="entry name" value="rpmI_bact"/>
    <property type="match status" value="1"/>
</dbReference>
<dbReference type="PANTHER" id="PTHR33343">
    <property type="entry name" value="54S RIBOSOMAL PROTEIN BL35M"/>
    <property type="match status" value="1"/>
</dbReference>
<dbReference type="PANTHER" id="PTHR33343:SF1">
    <property type="entry name" value="LARGE RIBOSOMAL SUBUNIT PROTEIN BL35M"/>
    <property type="match status" value="1"/>
</dbReference>
<dbReference type="Pfam" id="PF01632">
    <property type="entry name" value="Ribosomal_L35p"/>
    <property type="match status" value="1"/>
</dbReference>
<dbReference type="PRINTS" id="PR00064">
    <property type="entry name" value="RIBOSOMALL35"/>
</dbReference>
<dbReference type="SUPFAM" id="SSF143034">
    <property type="entry name" value="L35p-like"/>
    <property type="match status" value="1"/>
</dbReference>
<dbReference type="PROSITE" id="PS00936">
    <property type="entry name" value="RIBOSOMAL_L35"/>
    <property type="match status" value="1"/>
</dbReference>
<reference key="1">
    <citation type="journal article" date="1998" name="Science">
        <title>A distinctive class of integron in the Vibrio cholerae genome.</title>
        <authorList>
            <person name="Mazel D."/>
            <person name="Dychinco B."/>
            <person name="Webb V.A."/>
            <person name="Davies J."/>
        </authorList>
    </citation>
    <scope>NUCLEOTIDE SEQUENCE [GENOMIC DNA]</scope>
</reference>
<reference key="2">
    <citation type="submission" date="1999-08" db="EMBL/GenBank/DDBJ databases">
        <title>The Vibrio cholerea mega-integron.</title>
        <authorList>
            <person name="Clark C.A."/>
            <person name="Manning P.A."/>
        </authorList>
    </citation>
    <scope>NUCLEOTIDE SEQUENCE [GENOMIC DNA]</scope>
</reference>
<reference key="3">
    <citation type="journal article" date="2000" name="Nature">
        <title>DNA sequence of both chromosomes of the cholera pathogen Vibrio cholerae.</title>
        <authorList>
            <person name="Heidelberg J.F."/>
            <person name="Eisen J.A."/>
            <person name="Nelson W.C."/>
            <person name="Clayton R.A."/>
            <person name="Gwinn M.L."/>
            <person name="Dodson R.J."/>
            <person name="Haft D.H."/>
            <person name="Hickey E.K."/>
            <person name="Peterson J.D."/>
            <person name="Umayam L.A."/>
            <person name="Gill S.R."/>
            <person name="Nelson K.E."/>
            <person name="Read T.D."/>
            <person name="Tettelin H."/>
            <person name="Richardson D.L."/>
            <person name="Ermolaeva M.D."/>
            <person name="Vamathevan J.J."/>
            <person name="Bass S."/>
            <person name="Qin H."/>
            <person name="Dragoi I."/>
            <person name="Sellers P."/>
            <person name="McDonald L.A."/>
            <person name="Utterback T.R."/>
            <person name="Fleischmann R.D."/>
            <person name="Nierman W.C."/>
            <person name="White O."/>
            <person name="Salzberg S.L."/>
            <person name="Smith H.O."/>
            <person name="Colwell R.R."/>
            <person name="Mekalanos J.J."/>
            <person name="Venter J.C."/>
            <person name="Fraser C.M."/>
        </authorList>
    </citation>
    <scope>NUCLEOTIDE SEQUENCE [LARGE SCALE GENOMIC DNA]</scope>
    <source>
        <strain>ATCC 39315 / El Tor Inaba N16961</strain>
    </source>
</reference>
<name>RL35_VIBCH</name>
<keyword id="KW-1185">Reference proteome</keyword>
<keyword id="KW-0687">Ribonucleoprotein</keyword>
<keyword id="KW-0689">Ribosomal protein</keyword>
<organism>
    <name type="scientific">Vibrio cholerae serotype O1 (strain ATCC 39315 / El Tor Inaba N16961)</name>
    <dbReference type="NCBI Taxonomy" id="243277"/>
    <lineage>
        <taxon>Bacteria</taxon>
        <taxon>Pseudomonadati</taxon>
        <taxon>Pseudomonadota</taxon>
        <taxon>Gammaproteobacteria</taxon>
        <taxon>Vibrionales</taxon>
        <taxon>Vibrionaceae</taxon>
        <taxon>Vibrio</taxon>
    </lineage>
</organism>
<sequence>MPKMKNNKGAAKRFKKTAGGIKYKHATKRHILTKRTTKNKRQLRPNAILPKCELAAVARMLPYA</sequence>
<comment type="similarity">
    <text evidence="1">Belongs to the bacterial ribosomal protein bL35 family.</text>
</comment>
<accession>O68845</accession>
<accession>Q9JPV0</accession>
<gene>
    <name evidence="1" type="primary">rpmI</name>
    <name type="ordered locus">VC_A0289</name>
</gene>
<protein>
    <recommendedName>
        <fullName evidence="1">Large ribosomal subunit protein bL35</fullName>
    </recommendedName>
    <alternativeName>
        <fullName evidence="2">50S ribosomal protein L35</fullName>
    </alternativeName>
</protein>